<sequence>MVGRLRLAEGLNIPSFLGLAHQFSVSKDVDLSLVDRLCQNKILSSVLYFLCGRRLLVRLLGTAVHYWRGLCSMALLKAEGMYYIFFFLRKCISVNNRYKNFSPKRL</sequence>
<accession>A0A023PXF2</accession>
<protein>
    <recommendedName>
        <fullName>Putative uncharacterized protein YHR071C-A</fullName>
    </recommendedName>
</protein>
<name>YH071_YEAST</name>
<reference key="1">
    <citation type="journal article" date="1994" name="Science">
        <title>Complete nucleotide sequence of Saccharomyces cerevisiae chromosome VIII.</title>
        <authorList>
            <person name="Johnston M."/>
            <person name="Andrews S."/>
            <person name="Brinkman R."/>
            <person name="Cooper J."/>
            <person name="Ding H."/>
            <person name="Dover J."/>
            <person name="Du Z."/>
            <person name="Favello A."/>
            <person name="Fulton L."/>
            <person name="Gattung S."/>
            <person name="Geisel C."/>
            <person name="Kirsten J."/>
            <person name="Kucaba T."/>
            <person name="Hillier L.W."/>
            <person name="Jier M."/>
            <person name="Johnston L."/>
            <person name="Langston Y."/>
            <person name="Latreille P."/>
            <person name="Louis E.J."/>
            <person name="Macri C."/>
            <person name="Mardis E."/>
            <person name="Menezes S."/>
            <person name="Mouser L."/>
            <person name="Nhan M."/>
            <person name="Rifkin L."/>
            <person name="Riles L."/>
            <person name="St Peter H."/>
            <person name="Trevaskis E."/>
            <person name="Vaughan K."/>
            <person name="Vignati D."/>
            <person name="Wilcox L."/>
            <person name="Wohldman P."/>
            <person name="Waterston R."/>
            <person name="Wilson R."/>
            <person name="Vaudin M."/>
        </authorList>
    </citation>
    <scope>NUCLEOTIDE SEQUENCE [LARGE SCALE GENOMIC DNA]</scope>
    <source>
        <strain>ATCC 204508 / S288c</strain>
    </source>
</reference>
<reference key="2">
    <citation type="journal article" date="2014" name="G3 (Bethesda)">
        <title>The reference genome sequence of Saccharomyces cerevisiae: Then and now.</title>
        <authorList>
            <person name="Engel S.R."/>
            <person name="Dietrich F.S."/>
            <person name="Fisk D.G."/>
            <person name="Binkley G."/>
            <person name="Balakrishnan R."/>
            <person name="Costanzo M.C."/>
            <person name="Dwight S.S."/>
            <person name="Hitz B.C."/>
            <person name="Karra K."/>
            <person name="Nash R.S."/>
            <person name="Weng S."/>
            <person name="Wong E.D."/>
            <person name="Lloyd P."/>
            <person name="Skrzypek M.S."/>
            <person name="Miyasato S.R."/>
            <person name="Simison M."/>
            <person name="Cherry J.M."/>
        </authorList>
    </citation>
    <scope>GENOME REANNOTATION</scope>
    <source>
        <strain>ATCC 204508 / S288c</strain>
    </source>
</reference>
<gene>
    <name evidence="3" type="ordered locus">YHR071C-A</name>
</gene>
<proteinExistence type="uncertain"/>
<comment type="miscellaneous">
    <text evidence="1">Partially overlaps ERG7.</text>
</comment>
<comment type="caution">
    <text evidence="2">Product of a dubious gene prediction unlikely to encode a functional protein. Because of that it is not part of the S.cerevisiae S288c complete/reference proteome set.</text>
</comment>
<evidence type="ECO:0000305" key="1"/>
<evidence type="ECO:0000305" key="2">
    <source>
    </source>
</evidence>
<evidence type="ECO:0000312" key="3">
    <source>
        <dbReference type="SGD" id="S000028781"/>
    </source>
</evidence>
<organism>
    <name type="scientific">Saccharomyces cerevisiae (strain ATCC 204508 / S288c)</name>
    <name type="common">Baker's yeast</name>
    <dbReference type="NCBI Taxonomy" id="559292"/>
    <lineage>
        <taxon>Eukaryota</taxon>
        <taxon>Fungi</taxon>
        <taxon>Dikarya</taxon>
        <taxon>Ascomycota</taxon>
        <taxon>Saccharomycotina</taxon>
        <taxon>Saccharomycetes</taxon>
        <taxon>Saccharomycetales</taxon>
        <taxon>Saccharomycetaceae</taxon>
        <taxon>Saccharomyces</taxon>
    </lineage>
</organism>
<feature type="chain" id="PRO_0000431025" description="Putative uncharacterized protein YHR071C-A">
    <location>
        <begin position="1"/>
        <end position="106"/>
    </location>
</feature>
<dbReference type="EMBL" id="KJ412261">
    <property type="protein sequence ID" value="AHX39304.1"/>
    <property type="molecule type" value="Genomic_DNA"/>
</dbReference>
<dbReference type="PaxDb" id="4932-YHR071C-A"/>
<dbReference type="EnsemblFungi" id="YHR071C-A_mRNA">
    <property type="protein sequence ID" value="YHR071C-A"/>
    <property type="gene ID" value="YHR071C-A"/>
</dbReference>
<dbReference type="AGR" id="SGD:S000028781"/>
<dbReference type="SGD" id="S000028781">
    <property type="gene designation" value="YHR071C-A"/>
</dbReference>
<dbReference type="HOGENOM" id="CLU_2225295_0_0_1"/>